<reference key="1">
    <citation type="journal article" date="2006" name="Proc. Natl. Acad. Sci. U.S.A.">
        <title>Highly conserved syntenic blocks at the vertebrate Hox loci and conserved regulatory elements within and outside Hox gene clusters.</title>
        <authorList>
            <person name="Lee A.P."/>
            <person name="Koh E.G.L."/>
            <person name="Tay A."/>
            <person name="Brenner S."/>
            <person name="Venkatesh B."/>
        </authorList>
    </citation>
    <scope>NUCLEOTIDE SEQUENCE [GENOMIC DNA]</scope>
</reference>
<dbReference type="EMBL" id="DQ481663">
    <property type="protein sequence ID" value="ABF22383.1"/>
    <property type="molecule type" value="Genomic_DNA"/>
</dbReference>
<dbReference type="SMR" id="Q1KL11"/>
<dbReference type="FunCoup" id="Q1KL11">
    <property type="interactions" value="26"/>
</dbReference>
<dbReference type="STRING" id="31033.ENSTRUP00000040760"/>
<dbReference type="Ensembl" id="ENSTRUT00000040902.3">
    <property type="protein sequence ID" value="ENSTRUP00000040760.2"/>
    <property type="gene ID" value="ENSTRUG00000015941.3"/>
</dbReference>
<dbReference type="GeneID" id="101068014"/>
<dbReference type="KEGG" id="tru:101068014"/>
<dbReference type="GeneTree" id="ENSGT00940000155029"/>
<dbReference type="InParanoid" id="Q1KL11"/>
<dbReference type="OMA" id="IHDFQPF"/>
<dbReference type="OrthoDB" id="6159439at2759"/>
<dbReference type="Proteomes" id="UP000005226">
    <property type="component" value="Chromosome 12"/>
</dbReference>
<dbReference type="GO" id="GO:0005634">
    <property type="term" value="C:nucleus"/>
    <property type="evidence" value="ECO:0007669"/>
    <property type="project" value="UniProtKB-SubCell"/>
</dbReference>
<dbReference type="GO" id="GO:0000981">
    <property type="term" value="F:DNA-binding transcription factor activity, RNA polymerase II-specific"/>
    <property type="evidence" value="ECO:0007669"/>
    <property type="project" value="InterPro"/>
</dbReference>
<dbReference type="GO" id="GO:0000978">
    <property type="term" value="F:RNA polymerase II cis-regulatory region sequence-specific DNA binding"/>
    <property type="evidence" value="ECO:0007669"/>
    <property type="project" value="TreeGrafter"/>
</dbReference>
<dbReference type="CDD" id="cd00086">
    <property type="entry name" value="homeodomain"/>
    <property type="match status" value="1"/>
</dbReference>
<dbReference type="FunFam" id="1.10.10.60:FF:000145">
    <property type="entry name" value="homeobox protein Hox-A2"/>
    <property type="match status" value="1"/>
</dbReference>
<dbReference type="Gene3D" id="1.10.10.60">
    <property type="entry name" value="Homeodomain-like"/>
    <property type="match status" value="1"/>
</dbReference>
<dbReference type="InterPro" id="IPR001356">
    <property type="entry name" value="HD"/>
</dbReference>
<dbReference type="InterPro" id="IPR020479">
    <property type="entry name" value="HD_metazoa"/>
</dbReference>
<dbReference type="InterPro" id="IPR001827">
    <property type="entry name" value="Homeobox_Antennapedia_CS"/>
</dbReference>
<dbReference type="InterPro" id="IPR017970">
    <property type="entry name" value="Homeobox_CS"/>
</dbReference>
<dbReference type="InterPro" id="IPR009057">
    <property type="entry name" value="Homeodomain-like_sf"/>
</dbReference>
<dbReference type="PANTHER" id="PTHR45664:SF3">
    <property type="entry name" value="HOMEOBOX PROTEIN HOX-A2"/>
    <property type="match status" value="1"/>
</dbReference>
<dbReference type="PANTHER" id="PTHR45664">
    <property type="entry name" value="PROTEIN ZERKNUELLT 1-RELATED"/>
    <property type="match status" value="1"/>
</dbReference>
<dbReference type="Pfam" id="PF00046">
    <property type="entry name" value="Homeodomain"/>
    <property type="match status" value="1"/>
</dbReference>
<dbReference type="PRINTS" id="PR00024">
    <property type="entry name" value="HOMEOBOX"/>
</dbReference>
<dbReference type="SMART" id="SM00389">
    <property type="entry name" value="HOX"/>
    <property type="match status" value="1"/>
</dbReference>
<dbReference type="SUPFAM" id="SSF46689">
    <property type="entry name" value="Homeodomain-like"/>
    <property type="match status" value="1"/>
</dbReference>
<dbReference type="PROSITE" id="PS00032">
    <property type="entry name" value="ANTENNAPEDIA"/>
    <property type="match status" value="1"/>
</dbReference>
<dbReference type="PROSITE" id="PS00027">
    <property type="entry name" value="HOMEOBOX_1"/>
    <property type="match status" value="1"/>
</dbReference>
<dbReference type="PROSITE" id="PS50071">
    <property type="entry name" value="HOMEOBOX_2"/>
    <property type="match status" value="1"/>
</dbReference>
<evidence type="ECO:0000250" key="1"/>
<evidence type="ECO:0000255" key="2">
    <source>
        <dbReference type="PROSITE-ProRule" id="PRU00108"/>
    </source>
</evidence>
<evidence type="ECO:0000256" key="3">
    <source>
        <dbReference type="SAM" id="MobiDB-lite"/>
    </source>
</evidence>
<evidence type="ECO:0000305" key="4"/>
<keyword id="KW-0217">Developmental protein</keyword>
<keyword id="KW-0238">DNA-binding</keyword>
<keyword id="KW-0371">Homeobox</keyword>
<keyword id="KW-0539">Nucleus</keyword>
<keyword id="KW-1185">Reference proteome</keyword>
<keyword id="KW-0804">Transcription</keyword>
<keyword id="KW-0805">Transcription regulation</keyword>
<name>HXA2A_TAKRU</name>
<accession>Q1KL11</accession>
<feature type="chain" id="PRO_0000265963" description="Homeobox protein Hox-A2a">
    <location>
        <begin position="1"/>
        <end position="363"/>
    </location>
</feature>
<feature type="DNA-binding region" description="Homeobox" evidence="2">
    <location>
        <begin position="137"/>
        <end position="196"/>
    </location>
</feature>
<feature type="region of interest" description="Disordered" evidence="3">
    <location>
        <begin position="30"/>
        <end position="88"/>
    </location>
</feature>
<feature type="region of interest" description="Disordered" evidence="3">
    <location>
        <begin position="98"/>
        <end position="117"/>
    </location>
</feature>
<feature type="region of interest" description="Disordered" evidence="3">
    <location>
        <begin position="189"/>
        <end position="220"/>
    </location>
</feature>
<feature type="region of interest" description="Disordered" evidence="3">
    <location>
        <begin position="268"/>
        <end position="308"/>
    </location>
</feature>
<feature type="short sequence motif" description="Antp-type hexapeptide">
    <location>
        <begin position="88"/>
        <end position="93"/>
    </location>
</feature>
<feature type="compositionally biased region" description="Polar residues" evidence="3">
    <location>
        <begin position="31"/>
        <end position="44"/>
    </location>
</feature>
<feature type="compositionally biased region" description="Polar residues" evidence="3">
    <location>
        <begin position="103"/>
        <end position="113"/>
    </location>
</feature>
<sequence length="363" mass="39783">MNYEFERESGFINSQPSLAECLTSFPPVADSFQSSSIKSSTLSRPTLIPPPFEQTIPSLNPGSHPRHGRPRHSPDGCSPLPTASLPPEYPWMREKKASKRNHLPNSTTTTISNGPVCFSPKGSPEIVESAGGGGGGSRRLRTAYTNTQLLELEKEFHFNKYLCRPRRVEIAALLDLTERQVKVWFQNRRMKHKRQTQSKENHNAEGKGPSTEEGIHSDEEDEAPVFDRSGALLERDTCSFQKKSHGSAQQHHNSVSMGFAAAPLNSNDKNLKHFPNPSPTVPGCMSTIGPGSASGPDNSDSPPALDVSIHDFQPFSSDSCLQLSDAASPSLSESLDSPVDISTDSFYFFSESLTTIDLQHLSY</sequence>
<comment type="function">
    <text evidence="1">Sequence-specific transcription factor which is part of a developmental regulatory system that provides cells with specific positional identities on the anterior-posterior axis.</text>
</comment>
<comment type="subcellular location">
    <subcellularLocation>
        <location evidence="2">Nucleus</location>
    </subcellularLocation>
</comment>
<comment type="similarity">
    <text evidence="4">Belongs to the Antp homeobox family. Proboscipedia subfamily.</text>
</comment>
<organism>
    <name type="scientific">Takifugu rubripes</name>
    <name type="common">Japanese pufferfish</name>
    <name type="synonym">Fugu rubripes</name>
    <dbReference type="NCBI Taxonomy" id="31033"/>
    <lineage>
        <taxon>Eukaryota</taxon>
        <taxon>Metazoa</taxon>
        <taxon>Chordata</taxon>
        <taxon>Craniata</taxon>
        <taxon>Vertebrata</taxon>
        <taxon>Euteleostomi</taxon>
        <taxon>Actinopterygii</taxon>
        <taxon>Neopterygii</taxon>
        <taxon>Teleostei</taxon>
        <taxon>Neoteleostei</taxon>
        <taxon>Acanthomorphata</taxon>
        <taxon>Eupercaria</taxon>
        <taxon>Tetraodontiformes</taxon>
        <taxon>Tetradontoidea</taxon>
        <taxon>Tetraodontidae</taxon>
        <taxon>Takifugu</taxon>
    </lineage>
</organism>
<protein>
    <recommendedName>
        <fullName>Homeobox protein Hox-A2a</fullName>
    </recommendedName>
</protein>
<proteinExistence type="inferred from homology"/>
<gene>
    <name type="primary">hoxa2a</name>
</gene>